<keyword id="KW-0028">Amino-acid biosynthesis</keyword>
<keyword id="KW-0100">Branched-chain amino acid biosynthesis</keyword>
<keyword id="KW-0150">Chloroplast</keyword>
<keyword id="KW-0903">Direct protein sequencing</keyword>
<keyword id="KW-0460">Magnesium</keyword>
<keyword id="KW-0521">NADP</keyword>
<keyword id="KW-0560">Oxidoreductase</keyword>
<keyword id="KW-0934">Plastid</keyword>
<keyword id="KW-1185">Reference proteome</keyword>
<dbReference type="EC" id="1.1.1.86"/>
<dbReference type="UniPathway" id="UPA00047">
    <property type="reaction ID" value="UER00056"/>
</dbReference>
<dbReference type="UniPathway" id="UPA00049">
    <property type="reaction ID" value="UER00060"/>
</dbReference>
<dbReference type="Proteomes" id="UP000694918">
    <property type="component" value="Unplaced"/>
</dbReference>
<dbReference type="GO" id="GO:0009507">
    <property type="term" value="C:chloroplast"/>
    <property type="evidence" value="ECO:0007669"/>
    <property type="project" value="UniProtKB-SubCell"/>
</dbReference>
<dbReference type="GO" id="GO:0004455">
    <property type="term" value="F:ketol-acid reductoisomerase activity"/>
    <property type="evidence" value="ECO:0007669"/>
    <property type="project" value="UniProtKB-EC"/>
</dbReference>
<dbReference type="GO" id="GO:0009097">
    <property type="term" value="P:isoleucine biosynthetic process"/>
    <property type="evidence" value="ECO:0007669"/>
    <property type="project" value="UniProtKB-UniPathway"/>
</dbReference>
<dbReference type="GO" id="GO:0009099">
    <property type="term" value="P:L-valine biosynthetic process"/>
    <property type="evidence" value="ECO:0007669"/>
    <property type="project" value="UniProtKB-UniPathway"/>
</dbReference>
<organism>
    <name type="scientific">Populus euphratica</name>
    <name type="common">Euphrates poplar</name>
    <dbReference type="NCBI Taxonomy" id="75702"/>
    <lineage>
        <taxon>Eukaryota</taxon>
        <taxon>Viridiplantae</taxon>
        <taxon>Streptophyta</taxon>
        <taxon>Embryophyta</taxon>
        <taxon>Tracheophyta</taxon>
        <taxon>Spermatophyta</taxon>
        <taxon>Magnoliopsida</taxon>
        <taxon>eudicotyledons</taxon>
        <taxon>Gunneridae</taxon>
        <taxon>Pentapetalae</taxon>
        <taxon>rosids</taxon>
        <taxon>fabids</taxon>
        <taxon>Malpighiales</taxon>
        <taxon>Salicaceae</taxon>
        <taxon>Saliceae</taxon>
        <taxon>Populus</taxon>
    </lineage>
</organism>
<accession>P84534</accession>
<sequence length="14" mass="1614">FYEKEGLPAFPMGK</sequence>
<proteinExistence type="evidence at protein level"/>
<name>ILV5_POPEU</name>
<evidence type="ECO:0000250" key="1">
    <source>
        <dbReference type="UniProtKB" id="Q01292"/>
    </source>
</evidence>
<feature type="chain" id="PRO_0000151266" description="Ketol-acid reductoisomerase, chloroplastic">
    <location>
        <begin position="1" status="less than"/>
        <end position="14" status="greater than"/>
    </location>
</feature>
<feature type="non-terminal residue">
    <location>
        <position position="1"/>
    </location>
</feature>
<feature type="non-terminal residue">
    <location>
        <position position="14"/>
    </location>
</feature>
<reference key="1">
    <citation type="journal article" date="2006" name="Ann. Bot.">
        <title>Proteome profiling of Populus euphratica Oliv. upon heat stress.</title>
        <authorList>
            <person name="Ferreira S."/>
            <person name="Hjernoe K."/>
            <person name="Larsen M."/>
            <person name="Wingsle G."/>
            <person name="Larsen P."/>
            <person name="Fey S."/>
            <person name="Roepstorff P."/>
            <person name="Pais M.S."/>
        </authorList>
    </citation>
    <scope>PROTEIN SEQUENCE</scope>
    <source>
        <tissue>Leaf</tissue>
    </source>
</reference>
<comment type="catalytic activity">
    <reaction evidence="1">
        <text>(2R)-2,3-dihydroxy-3-methylbutanoate + NADP(+) = (2S)-2-acetolactate + NADPH + H(+)</text>
        <dbReference type="Rhea" id="RHEA:22068"/>
        <dbReference type="ChEBI" id="CHEBI:15378"/>
        <dbReference type="ChEBI" id="CHEBI:49072"/>
        <dbReference type="ChEBI" id="CHEBI:57783"/>
        <dbReference type="ChEBI" id="CHEBI:58349"/>
        <dbReference type="ChEBI" id="CHEBI:58476"/>
        <dbReference type="EC" id="1.1.1.86"/>
    </reaction>
</comment>
<comment type="catalytic activity">
    <reaction>
        <text>(2R,3R)-2,3-dihydroxy-3-methylpentanoate + NADP(+) = (S)-2-ethyl-2-hydroxy-3-oxobutanoate + NADPH + H(+)</text>
        <dbReference type="Rhea" id="RHEA:13493"/>
        <dbReference type="ChEBI" id="CHEBI:15378"/>
        <dbReference type="ChEBI" id="CHEBI:49256"/>
        <dbReference type="ChEBI" id="CHEBI:49258"/>
        <dbReference type="ChEBI" id="CHEBI:57783"/>
        <dbReference type="ChEBI" id="CHEBI:58349"/>
        <dbReference type="EC" id="1.1.1.86"/>
    </reaction>
</comment>
<comment type="cofactor">
    <cofactor evidence="1">
        <name>Mg(2+)</name>
        <dbReference type="ChEBI" id="CHEBI:18420"/>
    </cofactor>
</comment>
<comment type="pathway">
    <text>Amino-acid biosynthesis; L-isoleucine biosynthesis; L-isoleucine from 2-oxobutanoate: step 2/4.</text>
</comment>
<comment type="pathway">
    <text>Amino-acid biosynthesis; L-valine biosynthesis; L-valine from pyruvate: step 2/4.</text>
</comment>
<comment type="subunit">
    <text evidence="1">Tetramer of similar but non-identical chains.</text>
</comment>
<comment type="subcellular location">
    <subcellularLocation>
        <location evidence="1">Plastid</location>
        <location evidence="1">Chloroplast</location>
    </subcellularLocation>
</comment>
<comment type="similarity">
    <text evidence="1">Belongs to the ketol-acid reductoisomerase family.</text>
</comment>
<protein>
    <recommendedName>
        <fullName>Ketol-acid reductoisomerase, chloroplastic</fullName>
        <ecNumber>1.1.1.86</ecNumber>
    </recommendedName>
    <alternativeName>
        <fullName>Acetohydroxy-acid reductoisomerase</fullName>
    </alternativeName>
    <alternativeName>
        <fullName>Alpha-keto-beta-hydroxylacyl reductoisomerase</fullName>
    </alternativeName>
</protein>